<sequence length="46" mass="5066">MATAFLPSILADASFLSSIFVPVIGWVVPIATFSFLFLYIEREDVA</sequence>
<evidence type="ECO:0000250" key="1"/>
<evidence type="ECO:0000255" key="2"/>
<evidence type="ECO:0000269" key="3">
    <source>
    </source>
</evidence>
<evidence type="ECO:0000305" key="4"/>
<evidence type="ECO:0007829" key="5">
    <source>
        <dbReference type="PDB" id="6K61"/>
    </source>
</evidence>
<accession>P58560</accession>
<gene>
    <name type="primary">psaI</name>
    <name type="ordered locus">asl3849</name>
</gene>
<keyword id="KW-0002">3D-structure</keyword>
<keyword id="KW-0903">Direct protein sequencing</keyword>
<keyword id="KW-0472">Membrane</keyword>
<keyword id="KW-0602">Photosynthesis</keyword>
<keyword id="KW-0603">Photosystem I</keyword>
<keyword id="KW-1185">Reference proteome</keyword>
<keyword id="KW-0793">Thylakoid</keyword>
<keyword id="KW-0812">Transmembrane</keyword>
<keyword id="KW-1133">Transmembrane helix</keyword>
<reference key="1">
    <citation type="journal article" date="2001" name="DNA Res.">
        <title>Complete genomic sequence of the filamentous nitrogen-fixing cyanobacterium Anabaena sp. strain PCC 7120.</title>
        <authorList>
            <person name="Kaneko T."/>
            <person name="Nakamura Y."/>
            <person name="Wolk C.P."/>
            <person name="Kuritz T."/>
            <person name="Sasamoto S."/>
            <person name="Watanabe A."/>
            <person name="Iriguchi M."/>
            <person name="Ishikawa A."/>
            <person name="Kawashima K."/>
            <person name="Kimura T."/>
            <person name="Kishida Y."/>
            <person name="Kohara M."/>
            <person name="Matsumoto M."/>
            <person name="Matsuno A."/>
            <person name="Muraki A."/>
            <person name="Nakazaki N."/>
            <person name="Shimpo S."/>
            <person name="Sugimoto M."/>
            <person name="Takazawa M."/>
            <person name="Yamada M."/>
            <person name="Yasuda M."/>
            <person name="Tabata S."/>
        </authorList>
    </citation>
    <scope>NUCLEOTIDE SEQUENCE [LARGE SCALE GENOMIC DNA]</scope>
    <source>
        <strain>PCC 7120 / SAG 25.82 / UTEX 2576</strain>
    </source>
</reference>
<reference key="2">
    <citation type="journal article" date="2014" name="Proc. Natl. Acad. Sci. U.S.A.">
        <title>Attachment of phycobilisomes in an antenna-photosystem I supercomplex of cyanobacteria.</title>
        <authorList>
            <person name="Watanabe M."/>
            <person name="Semchonok D.A."/>
            <person name="Webber-Birungi M.T."/>
            <person name="Ehira S."/>
            <person name="Kondo K."/>
            <person name="Narikawa R."/>
            <person name="Ohmori M."/>
            <person name="Boekema E.J."/>
            <person name="Ikeuchi M."/>
        </authorList>
    </citation>
    <scope>PROTEIN SEQUENCE OF 12-21</scope>
    <scope>SUBUNIT</scope>
    <scope>SUBCELLULAR LOCATION</scope>
    <source>
        <strain>PCC 7120 / SAG 25.82 / UTEX 2576</strain>
    </source>
</reference>
<organism>
    <name type="scientific">Nostoc sp. (strain PCC 7120 / SAG 25.82 / UTEX 2576)</name>
    <dbReference type="NCBI Taxonomy" id="103690"/>
    <lineage>
        <taxon>Bacteria</taxon>
        <taxon>Bacillati</taxon>
        <taxon>Cyanobacteriota</taxon>
        <taxon>Cyanophyceae</taxon>
        <taxon>Nostocales</taxon>
        <taxon>Nostocaceae</taxon>
        <taxon>Nostoc</taxon>
    </lineage>
</organism>
<dbReference type="EMBL" id="BA000019">
    <property type="protein sequence ID" value="BAB75548.1"/>
    <property type="molecule type" value="Genomic_DNA"/>
</dbReference>
<dbReference type="PIR" id="AB2287">
    <property type="entry name" value="AB2287"/>
</dbReference>
<dbReference type="RefSeq" id="WP_010997990.1">
    <property type="nucleotide sequence ID" value="NZ_RSCN01000011.1"/>
</dbReference>
<dbReference type="PDB" id="6JEO">
    <property type="method" value="EM"/>
    <property type="resolution" value="3.30 A"/>
    <property type="chains" value="aI/bI/cI/dI=1-46"/>
</dbReference>
<dbReference type="PDB" id="6K61">
    <property type="method" value="EM"/>
    <property type="resolution" value="2.37 A"/>
    <property type="chains" value="I/i=1-46"/>
</dbReference>
<dbReference type="PDB" id="6TCL">
    <property type="method" value="EM"/>
    <property type="resolution" value="3.20 A"/>
    <property type="chains" value="I/I1/II=13-43, I2=13-45"/>
</dbReference>
<dbReference type="PDB" id="7Y3F">
    <property type="method" value="EM"/>
    <property type="resolution" value="2.62 A"/>
    <property type="chains" value="I=1-46"/>
</dbReference>
<dbReference type="PDBsum" id="6JEO"/>
<dbReference type="PDBsum" id="6K61"/>
<dbReference type="PDBsum" id="6TCL"/>
<dbReference type="PDBsum" id="7Y3F"/>
<dbReference type="EMDB" id="EMD-10461"/>
<dbReference type="EMDB" id="EMD-33593"/>
<dbReference type="EMDB" id="EMD-9807"/>
<dbReference type="EMDB" id="EMD-9918"/>
<dbReference type="SMR" id="P58560"/>
<dbReference type="STRING" id="103690.gene:10495891"/>
<dbReference type="KEGG" id="ana:asl3849"/>
<dbReference type="eggNOG" id="ENOG5030M43">
    <property type="taxonomic scope" value="Bacteria"/>
</dbReference>
<dbReference type="OrthoDB" id="467737at2"/>
<dbReference type="Proteomes" id="UP000002483">
    <property type="component" value="Chromosome"/>
</dbReference>
<dbReference type="GO" id="GO:0009522">
    <property type="term" value="C:photosystem I"/>
    <property type="evidence" value="ECO:0007669"/>
    <property type="project" value="UniProtKB-KW"/>
</dbReference>
<dbReference type="GO" id="GO:0031676">
    <property type="term" value="C:plasma membrane-derived thylakoid membrane"/>
    <property type="evidence" value="ECO:0007669"/>
    <property type="project" value="UniProtKB-SubCell"/>
</dbReference>
<dbReference type="GO" id="GO:0015979">
    <property type="term" value="P:photosynthesis"/>
    <property type="evidence" value="ECO:0007669"/>
    <property type="project" value="UniProtKB-UniRule"/>
</dbReference>
<dbReference type="HAMAP" id="MF_00431">
    <property type="entry name" value="PSI_PsaI"/>
    <property type="match status" value="1"/>
</dbReference>
<dbReference type="InterPro" id="IPR001302">
    <property type="entry name" value="PSI_PsaI"/>
</dbReference>
<dbReference type="InterPro" id="IPR036357">
    <property type="entry name" value="PSI_PsaI_sf"/>
</dbReference>
<dbReference type="Pfam" id="PF00796">
    <property type="entry name" value="PSI_8"/>
    <property type="match status" value="1"/>
</dbReference>
<dbReference type="SUPFAM" id="SSF81540">
    <property type="entry name" value="Subunit VIII of photosystem I reaction centre, PsaI"/>
    <property type="match status" value="1"/>
</dbReference>
<protein>
    <recommendedName>
        <fullName>Photosystem I reaction center subunit VIII</fullName>
    </recommendedName>
</protein>
<comment type="function">
    <text evidence="1">May help in the organization of the PsaL subunit.</text>
</comment>
<comment type="subunit">
    <text evidence="3">The cyanobacterial PSI reaction center is composed of one copy each of PsaA,B,C,D,E,F,I,J,K,L,M and X, and forms dimeric and tetrameric complexes.</text>
</comment>
<comment type="subcellular location">
    <subcellularLocation>
        <location evidence="3">Cellular thylakoid membrane</location>
        <topology evidence="1">Single-pass membrane protein</topology>
    </subcellularLocation>
</comment>
<comment type="similarity">
    <text evidence="4">Belongs to the PsaI family.</text>
</comment>
<proteinExistence type="evidence at protein level"/>
<feature type="propeptide" id="PRO_0000029420">
    <location>
        <begin position="1"/>
        <end position="11"/>
    </location>
</feature>
<feature type="chain" id="PRO_0000029421" description="Photosystem I reaction center subunit VIII">
    <location>
        <begin position="12"/>
        <end position="46"/>
    </location>
</feature>
<feature type="transmembrane region" description="Helical" evidence="2">
    <location>
        <begin position="20"/>
        <end position="40"/>
    </location>
</feature>
<feature type="helix" evidence="5">
    <location>
        <begin position="14"/>
        <end position="16"/>
    </location>
</feature>
<feature type="helix" evidence="5">
    <location>
        <begin position="17"/>
        <end position="25"/>
    </location>
</feature>
<feature type="helix" evidence="5">
    <location>
        <begin position="27"/>
        <end position="40"/>
    </location>
</feature>
<name>PSAI_NOSS1</name>